<name>LTBE_ASPLT</name>
<comment type="function">
    <text evidence="4 7">MFS-type transporter; part of the gene cluster that mediates the biosynthesis of luteodienoside A, a glycosylated polyketide consisting of an unusual 1-O-beta-D-glucopyranosyl-myo-inositol (glucinol) ester of 3-hydroxy-2,2,4-trimethylocta-4,6-dienoic acid (PubMed:38425541). LtbE is probably involved in the secretion of luteodienoside A (Probable).</text>
</comment>
<comment type="subcellular location">
    <subcellularLocation>
        <location evidence="6">Cell membrane</location>
        <topology evidence="1">Multi-pass membrane protein</topology>
    </subcellularLocation>
</comment>
<comment type="similarity">
    <text evidence="6">Belongs to the major facilitator superfamily. TCR/Tet family.</text>
</comment>
<proteinExistence type="inferred from homology"/>
<sequence>MEIAAETTGPAGVTTDVTNAEESTEQPATRYMQGWALASLTVAFMSICLVLAIDNTILATAIPHITSDFKSLNDIGWYGSSYLIAQMALLPTCGRLYAFYNIKWVYCLSLAIFELGSIIAAVAPNSMSLIIGRAISGLGAAGLVSGTTTILSYCVSLRNQAMLSPIVLGMYNIGSAMGPLIGGSITDNKVLTWRFIFWINLPFGAVALVLVWFTLRKPPPAVKGNLLWVQKLRQLDLPGATLLLGATTCLNLALQWGGIVYPWSDSKVFGCLIGFGLLLITFLCLQWRGKENANIPLRIFRSRTVSASCGFMMLVQVAIVVQSYFWPIYFQSVRNTNARDSGINLLPLIISNSLSTLCAGSLASRFGHYVPFMWVGPLILATGGGLYQLVRPDTPSGKWIGFQILSGVGYGCCSQMPILAVQVVLRKPDIPTGLVMIMFFQMLGGALAPSVGQNLFTDGLLRNLTKVQGIDATAVVAAGASGFRAIVPSELLNAVVDAFNSALRDVFWVGVATPALAWIASWAMEWRQLPDSKKKVTETPAEEGREK</sequence>
<dbReference type="EMBL" id="OR597289">
    <property type="protein sequence ID" value="WWQ80777.1"/>
    <property type="molecule type" value="Genomic_DNA"/>
</dbReference>
<dbReference type="SMR" id="P9WEH4"/>
<dbReference type="GO" id="GO:0005886">
    <property type="term" value="C:plasma membrane"/>
    <property type="evidence" value="ECO:0007669"/>
    <property type="project" value="UniProtKB-SubCell"/>
</dbReference>
<dbReference type="GO" id="GO:0022857">
    <property type="term" value="F:transmembrane transporter activity"/>
    <property type="evidence" value="ECO:0007669"/>
    <property type="project" value="InterPro"/>
</dbReference>
<dbReference type="CDD" id="cd17502">
    <property type="entry name" value="MFS_Azr1_MDR_like"/>
    <property type="match status" value="1"/>
</dbReference>
<dbReference type="FunFam" id="1.20.1250.20:FF:000196">
    <property type="entry name" value="MFS toxin efflux pump (AflT)"/>
    <property type="match status" value="1"/>
</dbReference>
<dbReference type="Gene3D" id="1.20.1250.20">
    <property type="entry name" value="MFS general substrate transporter like domains"/>
    <property type="match status" value="1"/>
</dbReference>
<dbReference type="Gene3D" id="1.20.1720.10">
    <property type="entry name" value="Multidrug resistance protein D"/>
    <property type="match status" value="1"/>
</dbReference>
<dbReference type="InterPro" id="IPR011701">
    <property type="entry name" value="MFS"/>
</dbReference>
<dbReference type="InterPro" id="IPR020846">
    <property type="entry name" value="MFS_dom"/>
</dbReference>
<dbReference type="InterPro" id="IPR036259">
    <property type="entry name" value="MFS_trans_sf"/>
</dbReference>
<dbReference type="PANTHER" id="PTHR23501">
    <property type="entry name" value="MAJOR FACILITATOR SUPERFAMILY"/>
    <property type="match status" value="1"/>
</dbReference>
<dbReference type="PANTHER" id="PTHR23501:SF199">
    <property type="entry name" value="MFS EFFLUX TRANSPORTER INPD-RELATED"/>
    <property type="match status" value="1"/>
</dbReference>
<dbReference type="Pfam" id="PF07690">
    <property type="entry name" value="MFS_1"/>
    <property type="match status" value="1"/>
</dbReference>
<dbReference type="SUPFAM" id="SSF103473">
    <property type="entry name" value="MFS general substrate transporter"/>
    <property type="match status" value="1"/>
</dbReference>
<dbReference type="PROSITE" id="PS50850">
    <property type="entry name" value="MFS"/>
    <property type="match status" value="1"/>
</dbReference>
<evidence type="ECO:0000255" key="1"/>
<evidence type="ECO:0000255" key="2">
    <source>
        <dbReference type="PROSITE-ProRule" id="PRU00498"/>
    </source>
</evidence>
<evidence type="ECO:0000256" key="3">
    <source>
        <dbReference type="SAM" id="MobiDB-lite"/>
    </source>
</evidence>
<evidence type="ECO:0000269" key="4">
    <source>
    </source>
</evidence>
<evidence type="ECO:0000303" key="5">
    <source>
    </source>
</evidence>
<evidence type="ECO:0000305" key="6"/>
<evidence type="ECO:0000305" key="7">
    <source>
    </source>
</evidence>
<protein>
    <recommendedName>
        <fullName evidence="5">MFS-type transporter ltbE</fullName>
    </recommendedName>
    <alternativeName>
        <fullName evidence="5">Luteodienoside A biosynthesis cluster protein E</fullName>
    </alternativeName>
</protein>
<gene>
    <name evidence="5" type="primary">ltbE</name>
</gene>
<accession>P9WEH4</accession>
<reference key="1">
    <citation type="journal article" date="2024" name="Chem. Sci.">
        <title>Discovery and heterologous biosynthesis of glycosylated polyketide luteodienoside A reveals unprecedented glucinol-mediated product offloading by a fungal carnitine O-acyltransferase domain.</title>
        <authorList>
            <person name="Arishi A.A."/>
            <person name="Shang Z."/>
            <person name="Lacey E."/>
            <person name="Crombie A."/>
            <person name="Vuong D."/>
            <person name="Li H."/>
            <person name="Bracegirdle J."/>
            <person name="Turner P."/>
            <person name="Lewis W."/>
            <person name="Flematti G.R."/>
            <person name="Piggott A.M."/>
            <person name="Chooi Y.H."/>
        </authorList>
    </citation>
    <scope>NUCLEOTIDE SEQUENCE [GENOMIC DNA]</scope>
    <scope>FUNCTION</scope>
    <source>
        <strain>CBS 146723 / FRR 5427 / MST FP 2246</strain>
    </source>
</reference>
<keyword id="KW-1003">Cell membrane</keyword>
<keyword id="KW-0325">Glycoprotein</keyword>
<keyword id="KW-0472">Membrane</keyword>
<keyword id="KW-0812">Transmembrane</keyword>
<keyword id="KW-1133">Transmembrane helix</keyword>
<keyword id="KW-0813">Transport</keyword>
<organism>
    <name type="scientific">Aspergillus luteorubrus</name>
    <dbReference type="NCBI Taxonomy" id="2715282"/>
    <lineage>
        <taxon>Eukaryota</taxon>
        <taxon>Fungi</taxon>
        <taxon>Dikarya</taxon>
        <taxon>Ascomycota</taxon>
        <taxon>Pezizomycotina</taxon>
        <taxon>Eurotiomycetes</taxon>
        <taxon>Eurotiomycetidae</taxon>
        <taxon>Eurotiales</taxon>
        <taxon>Aspergillaceae</taxon>
        <taxon>Aspergillus</taxon>
    </lineage>
</organism>
<feature type="chain" id="PRO_0000461482" description="MFS-type transporter ltbE">
    <location>
        <begin position="1"/>
        <end position="547"/>
    </location>
</feature>
<feature type="transmembrane region" description="Helical" evidence="1">
    <location>
        <begin position="33"/>
        <end position="53"/>
    </location>
</feature>
<feature type="transmembrane region" description="Helical" evidence="1">
    <location>
        <begin position="74"/>
        <end position="94"/>
    </location>
</feature>
<feature type="transmembrane region" description="Helical" evidence="1">
    <location>
        <begin position="104"/>
        <end position="124"/>
    </location>
</feature>
<feature type="transmembrane region" description="Helical" evidence="1">
    <location>
        <begin position="135"/>
        <end position="155"/>
    </location>
</feature>
<feature type="transmembrane region" description="Helical" evidence="1">
    <location>
        <begin position="165"/>
        <end position="185"/>
    </location>
</feature>
<feature type="transmembrane region" description="Helical" evidence="1">
    <location>
        <begin position="195"/>
        <end position="215"/>
    </location>
</feature>
<feature type="transmembrane region" description="Helical" evidence="1">
    <location>
        <begin position="240"/>
        <end position="260"/>
    </location>
</feature>
<feature type="transmembrane region" description="Helical" evidence="1">
    <location>
        <begin position="267"/>
        <end position="287"/>
    </location>
</feature>
<feature type="transmembrane region" description="Helical" evidence="1">
    <location>
        <begin position="310"/>
        <end position="330"/>
    </location>
</feature>
<feature type="transmembrane region" description="Helical" evidence="1">
    <location>
        <begin position="343"/>
        <end position="363"/>
    </location>
</feature>
<feature type="transmembrane region" description="Helical" evidence="1">
    <location>
        <begin position="370"/>
        <end position="390"/>
    </location>
</feature>
<feature type="transmembrane region" description="Helical" evidence="1">
    <location>
        <begin position="399"/>
        <end position="419"/>
    </location>
</feature>
<feature type="transmembrane region" description="Helical" evidence="1">
    <location>
        <begin position="432"/>
        <end position="452"/>
    </location>
</feature>
<feature type="transmembrane region" description="Helical" evidence="1">
    <location>
        <begin position="506"/>
        <end position="526"/>
    </location>
</feature>
<feature type="region of interest" description="Disordered" evidence="3">
    <location>
        <begin position="1"/>
        <end position="23"/>
    </location>
</feature>
<feature type="glycosylation site" description="N-linked (GlcNAc...) asparagine" evidence="2">
    <location>
        <position position="463"/>
    </location>
</feature>